<accession>Q7S4Z3</accession>
<proteinExistence type="inferred from homology"/>
<organism>
    <name type="scientific">Neurospora crassa (strain ATCC 24698 / 74-OR23-1A / CBS 708.71 / DSM 1257 / FGSC 987)</name>
    <dbReference type="NCBI Taxonomy" id="367110"/>
    <lineage>
        <taxon>Eukaryota</taxon>
        <taxon>Fungi</taxon>
        <taxon>Dikarya</taxon>
        <taxon>Ascomycota</taxon>
        <taxon>Pezizomycotina</taxon>
        <taxon>Sordariomycetes</taxon>
        <taxon>Sordariomycetidae</taxon>
        <taxon>Sordariales</taxon>
        <taxon>Sordariaceae</taxon>
        <taxon>Neurospora</taxon>
    </lineage>
</organism>
<protein>
    <recommendedName>
        <fullName>GPI mannosyltransferase 1</fullName>
        <ecNumber>2.4.1.-</ecNumber>
    </recommendedName>
    <alternativeName>
        <fullName>GPI mannosyltransferase I</fullName>
        <shortName>GPI-MT-I</shortName>
    </alternativeName>
    <alternativeName>
        <fullName>Glycosylphosphatidylinositol-anchor biosynthesis protein 14</fullName>
    </alternativeName>
</protein>
<dbReference type="EC" id="2.4.1.-"/>
<dbReference type="EMBL" id="CM002242">
    <property type="protein sequence ID" value="EAA30584.1"/>
    <property type="molecule type" value="Genomic_DNA"/>
</dbReference>
<dbReference type="RefSeq" id="XP_959820.1">
    <property type="nucleotide sequence ID" value="XM_954727.2"/>
</dbReference>
<dbReference type="FunCoup" id="Q7S4Z3">
    <property type="interactions" value="580"/>
</dbReference>
<dbReference type="STRING" id="367110.Q7S4Z3"/>
<dbReference type="CAZy" id="GT50">
    <property type="family name" value="Glycosyltransferase Family 50"/>
</dbReference>
<dbReference type="PaxDb" id="5141-EFNCRP00000005331"/>
<dbReference type="EnsemblFungi" id="EAA30584">
    <property type="protein sequence ID" value="EAA30584"/>
    <property type="gene ID" value="NCU06057"/>
</dbReference>
<dbReference type="GeneID" id="3875967"/>
<dbReference type="KEGG" id="ncr:NCU06057"/>
<dbReference type="VEuPathDB" id="FungiDB:NCU06057"/>
<dbReference type="HOGENOM" id="CLU_024220_1_0_1"/>
<dbReference type="InParanoid" id="Q7S4Z3"/>
<dbReference type="OMA" id="MLWFIGQ"/>
<dbReference type="OrthoDB" id="1741594at2759"/>
<dbReference type="UniPathway" id="UPA00196"/>
<dbReference type="Proteomes" id="UP000001805">
    <property type="component" value="Chromosome 7, Linkage Group VII"/>
</dbReference>
<dbReference type="GO" id="GO:0005789">
    <property type="term" value="C:endoplasmic reticulum membrane"/>
    <property type="evidence" value="ECO:0007669"/>
    <property type="project" value="UniProtKB-SubCell"/>
</dbReference>
<dbReference type="GO" id="GO:1990529">
    <property type="term" value="C:glycosylphosphatidylinositol-mannosyltransferase I complex"/>
    <property type="evidence" value="ECO:0000318"/>
    <property type="project" value="GO_Central"/>
</dbReference>
<dbReference type="GO" id="GO:0051751">
    <property type="term" value="F:alpha-1,4-mannosyltransferase activity"/>
    <property type="evidence" value="ECO:0007669"/>
    <property type="project" value="InterPro"/>
</dbReference>
<dbReference type="GO" id="GO:0004376">
    <property type="term" value="F:glycolipid mannosyltransferase activity"/>
    <property type="evidence" value="ECO:0007669"/>
    <property type="project" value="InterPro"/>
</dbReference>
<dbReference type="GO" id="GO:0000030">
    <property type="term" value="F:mannosyltransferase activity"/>
    <property type="evidence" value="ECO:0000318"/>
    <property type="project" value="GO_Central"/>
</dbReference>
<dbReference type="GO" id="GO:0071555">
    <property type="term" value="P:cell wall organization"/>
    <property type="evidence" value="ECO:0007669"/>
    <property type="project" value="UniProtKB-KW"/>
</dbReference>
<dbReference type="GO" id="GO:0006506">
    <property type="term" value="P:GPI anchor biosynthetic process"/>
    <property type="evidence" value="ECO:0000318"/>
    <property type="project" value="GO_Central"/>
</dbReference>
<dbReference type="InterPro" id="IPR007704">
    <property type="entry name" value="PIG-M"/>
</dbReference>
<dbReference type="PANTHER" id="PTHR12886:SF0">
    <property type="entry name" value="GPI MANNOSYLTRANSFERASE 1"/>
    <property type="match status" value="1"/>
</dbReference>
<dbReference type="PANTHER" id="PTHR12886">
    <property type="entry name" value="PIG-M MANNOSYLTRANSFERASE"/>
    <property type="match status" value="1"/>
</dbReference>
<dbReference type="Pfam" id="PF05007">
    <property type="entry name" value="Mannosyl_trans"/>
    <property type="match status" value="1"/>
</dbReference>
<evidence type="ECO:0000250" key="1"/>
<evidence type="ECO:0000255" key="2"/>
<evidence type="ECO:0000256" key="3">
    <source>
        <dbReference type="SAM" id="MobiDB-lite"/>
    </source>
</evidence>
<evidence type="ECO:0000305" key="4"/>
<name>GPI14_NEUCR</name>
<feature type="chain" id="PRO_0000246232" description="GPI mannosyltransferase 1">
    <location>
        <begin position="1"/>
        <end position="487"/>
    </location>
</feature>
<feature type="transmembrane region" description="Helical" evidence="2">
    <location>
        <begin position="26"/>
        <end position="46"/>
    </location>
</feature>
<feature type="transmembrane region" description="Helical" evidence="2">
    <location>
        <begin position="87"/>
        <end position="107"/>
    </location>
</feature>
<feature type="transmembrane region" description="Helical" evidence="2">
    <location>
        <begin position="121"/>
        <end position="141"/>
    </location>
</feature>
<feature type="transmembrane region" description="Helical" evidence="2">
    <location>
        <begin position="205"/>
        <end position="225"/>
    </location>
</feature>
<feature type="transmembrane region" description="Helical" evidence="2">
    <location>
        <begin position="227"/>
        <end position="247"/>
    </location>
</feature>
<feature type="transmembrane region" description="Helical" evidence="2">
    <location>
        <begin position="289"/>
        <end position="309"/>
    </location>
</feature>
<feature type="transmembrane region" description="Helical" evidence="2">
    <location>
        <begin position="359"/>
        <end position="379"/>
    </location>
</feature>
<feature type="transmembrane region" description="Helical" evidence="2">
    <location>
        <begin position="393"/>
        <end position="413"/>
    </location>
</feature>
<feature type="transmembrane region" description="Helical" evidence="2">
    <location>
        <begin position="429"/>
        <end position="449"/>
    </location>
</feature>
<feature type="transmembrane region" description="Helical" evidence="2">
    <location>
        <begin position="462"/>
        <end position="482"/>
    </location>
</feature>
<feature type="region of interest" description="Disordered" evidence="3">
    <location>
        <begin position="147"/>
        <end position="175"/>
    </location>
</feature>
<feature type="compositionally biased region" description="Basic and acidic residues" evidence="3">
    <location>
        <begin position="150"/>
        <end position="164"/>
    </location>
</feature>
<comment type="function">
    <text evidence="1">Mannosyltransferase involved in glycosylphosphatidylinositol-anchor biosynthesis. Transfers the first alpha-1,4-mannose to GlcN-acyl-PI during GPI precursor assembly. Required for cell wall integrity (By similarity).</text>
</comment>
<comment type="pathway">
    <text>Glycolipid biosynthesis; glycosylphosphatidylinositol-anchor biosynthesis.</text>
</comment>
<comment type="subcellular location">
    <subcellularLocation>
        <location evidence="1">Endoplasmic reticulum membrane</location>
        <topology evidence="1">Multi-pass membrane protein</topology>
    </subcellularLocation>
</comment>
<comment type="similarity">
    <text evidence="4">Belongs to the PIGM family.</text>
</comment>
<sequence>MATTSPAAPRPKSKSSSLLSTLFSRPLPLYVSAFLLRIVLLLYGLWQDANSPLKYTDIDYLVFTDAARFVSRGESPYARETYRYTPILAWLLLPTTWTAGAQWGPWAAKVINVAWFSFGKVLFAAADLVAGWLIEQVLVMGKDFPSSAAKGKEKDTEKTKEGGKKGPSVTASTGMDPSRARAFAAIWLLNPMVATISTRGSSEGLLGVLVMALLWAVLSRRITLAGLLLGFSVHFKIYPFIYAPAIVWWMDQERLSGVRAGGGGGGGGQKKTSSSFRKTLTRFLTLPRLLLAFTSLATFLSLNFLMYRLYGHPFLQETYLHHVTRIDHRHNFSPYNTQLYLSSASVSPSHSAAEPKFKIESLAFLPQLVLSTILIPLTLAKKDLPTSLLAQTFAFVTFNKVCTSQYFLWYLVLLPLYLPRSSFWTSKRMGLVALGLWVLGQALWLQQAYELEFLGRSTFLPGLWMASLGFFVVNCWILGVIVGDGGR</sequence>
<reference key="1">
    <citation type="journal article" date="2003" name="Nature">
        <title>The genome sequence of the filamentous fungus Neurospora crassa.</title>
        <authorList>
            <person name="Galagan J.E."/>
            <person name="Calvo S.E."/>
            <person name="Borkovich K.A."/>
            <person name="Selker E.U."/>
            <person name="Read N.D."/>
            <person name="Jaffe D.B."/>
            <person name="FitzHugh W."/>
            <person name="Ma L.-J."/>
            <person name="Smirnov S."/>
            <person name="Purcell S."/>
            <person name="Rehman B."/>
            <person name="Elkins T."/>
            <person name="Engels R."/>
            <person name="Wang S."/>
            <person name="Nielsen C.B."/>
            <person name="Butler J."/>
            <person name="Endrizzi M."/>
            <person name="Qui D."/>
            <person name="Ianakiev P."/>
            <person name="Bell-Pedersen D."/>
            <person name="Nelson M.A."/>
            <person name="Werner-Washburne M."/>
            <person name="Selitrennikoff C.P."/>
            <person name="Kinsey J.A."/>
            <person name="Braun E.L."/>
            <person name="Zelter A."/>
            <person name="Schulte U."/>
            <person name="Kothe G.O."/>
            <person name="Jedd G."/>
            <person name="Mewes H.-W."/>
            <person name="Staben C."/>
            <person name="Marcotte E."/>
            <person name="Greenberg D."/>
            <person name="Roy A."/>
            <person name="Foley K."/>
            <person name="Naylor J."/>
            <person name="Stange-Thomann N."/>
            <person name="Barrett R."/>
            <person name="Gnerre S."/>
            <person name="Kamal M."/>
            <person name="Kamvysselis M."/>
            <person name="Mauceli E.W."/>
            <person name="Bielke C."/>
            <person name="Rudd S."/>
            <person name="Frishman D."/>
            <person name="Krystofova S."/>
            <person name="Rasmussen C."/>
            <person name="Metzenberg R.L."/>
            <person name="Perkins D.D."/>
            <person name="Kroken S."/>
            <person name="Cogoni C."/>
            <person name="Macino G."/>
            <person name="Catcheside D.E.A."/>
            <person name="Li W."/>
            <person name="Pratt R.J."/>
            <person name="Osmani S.A."/>
            <person name="DeSouza C.P.C."/>
            <person name="Glass N.L."/>
            <person name="Orbach M.J."/>
            <person name="Berglund J.A."/>
            <person name="Voelker R."/>
            <person name="Yarden O."/>
            <person name="Plamann M."/>
            <person name="Seiler S."/>
            <person name="Dunlap J.C."/>
            <person name="Radford A."/>
            <person name="Aramayo R."/>
            <person name="Natvig D.O."/>
            <person name="Alex L.A."/>
            <person name="Mannhaupt G."/>
            <person name="Ebbole D.J."/>
            <person name="Freitag M."/>
            <person name="Paulsen I."/>
            <person name="Sachs M.S."/>
            <person name="Lander E.S."/>
            <person name="Nusbaum C."/>
            <person name="Birren B.W."/>
        </authorList>
    </citation>
    <scope>NUCLEOTIDE SEQUENCE [LARGE SCALE GENOMIC DNA]</scope>
    <source>
        <strain>ATCC 24698 / 74-OR23-1A / CBS 708.71 / DSM 1257 / FGSC 987</strain>
    </source>
</reference>
<keyword id="KW-0961">Cell wall biogenesis/degradation</keyword>
<keyword id="KW-0256">Endoplasmic reticulum</keyword>
<keyword id="KW-0328">Glycosyltransferase</keyword>
<keyword id="KW-0337">GPI-anchor biosynthesis</keyword>
<keyword id="KW-0472">Membrane</keyword>
<keyword id="KW-1185">Reference proteome</keyword>
<keyword id="KW-0808">Transferase</keyword>
<keyword id="KW-0812">Transmembrane</keyword>
<keyword id="KW-1133">Transmembrane helix</keyword>
<gene>
    <name type="primary">gim-1</name>
    <name type="synonym">gpi14</name>
    <name type="ORF">NCU06057</name>
</gene>